<proteinExistence type="inferred from homology"/>
<comment type="function">
    <text evidence="1">GTP hydrolase that promotes the GTP-dependent binding of aminoacyl-tRNA to the A-site of ribosomes during protein biosynthesis.</text>
</comment>
<comment type="catalytic activity">
    <reaction evidence="1">
        <text>GTP + H2O = GDP + phosphate + H(+)</text>
        <dbReference type="Rhea" id="RHEA:19669"/>
        <dbReference type="ChEBI" id="CHEBI:15377"/>
        <dbReference type="ChEBI" id="CHEBI:15378"/>
        <dbReference type="ChEBI" id="CHEBI:37565"/>
        <dbReference type="ChEBI" id="CHEBI:43474"/>
        <dbReference type="ChEBI" id="CHEBI:58189"/>
        <dbReference type="EC" id="3.6.5.3"/>
    </reaction>
    <physiologicalReaction direction="left-to-right" evidence="1">
        <dbReference type="Rhea" id="RHEA:19670"/>
    </physiologicalReaction>
</comment>
<comment type="subunit">
    <text evidence="1">Monomer.</text>
</comment>
<comment type="subcellular location">
    <subcellularLocation>
        <location evidence="1">Cytoplasm</location>
    </subcellularLocation>
</comment>
<comment type="similarity">
    <text evidence="1">Belongs to the TRAFAC class translation factor GTPase superfamily. Classic translation factor GTPase family. EF-Tu/EF-1A subfamily.</text>
</comment>
<keyword id="KW-0963">Cytoplasm</keyword>
<keyword id="KW-0251">Elongation factor</keyword>
<keyword id="KW-0342">GTP-binding</keyword>
<keyword id="KW-0378">Hydrolase</keyword>
<keyword id="KW-0460">Magnesium</keyword>
<keyword id="KW-0479">Metal-binding</keyword>
<keyword id="KW-0547">Nucleotide-binding</keyword>
<keyword id="KW-0648">Protein biosynthesis</keyword>
<name>EFTU_BRAHW</name>
<accession>C0QVZ4</accession>
<feature type="chain" id="PRO_1000201391" description="Elongation factor Tu">
    <location>
        <begin position="1"/>
        <end position="408"/>
    </location>
</feature>
<feature type="domain" description="tr-type G">
    <location>
        <begin position="10"/>
        <end position="219"/>
    </location>
</feature>
<feature type="binding site" evidence="1">
    <location>
        <begin position="19"/>
        <end position="26"/>
    </location>
    <ligand>
        <name>GTP</name>
        <dbReference type="ChEBI" id="CHEBI:37565"/>
    </ligand>
</feature>
<feature type="binding site" evidence="1">
    <location>
        <position position="26"/>
    </location>
    <ligand>
        <name>Mg(2+)</name>
        <dbReference type="ChEBI" id="CHEBI:18420"/>
    </ligand>
</feature>
<feature type="binding site" evidence="1">
    <location>
        <begin position="88"/>
        <end position="92"/>
    </location>
    <ligand>
        <name>GTP</name>
        <dbReference type="ChEBI" id="CHEBI:37565"/>
    </ligand>
</feature>
<feature type="binding site" evidence="1">
    <location>
        <begin position="143"/>
        <end position="146"/>
    </location>
    <ligand>
        <name>GTP</name>
        <dbReference type="ChEBI" id="CHEBI:37565"/>
    </ligand>
</feature>
<gene>
    <name evidence="1" type="primary">tuf</name>
    <name type="ordered locus">BHWA1_02122</name>
</gene>
<reference key="1">
    <citation type="journal article" date="2009" name="PLoS ONE">
        <title>Genome sequence of the pathogenic intestinal spirochete Brachyspira hyodysenteriae reveals adaptations to its lifestyle in the porcine large intestine.</title>
        <authorList>
            <person name="Bellgard M.I."/>
            <person name="Wanchanthuek P."/>
            <person name="La T."/>
            <person name="Ryan K."/>
            <person name="Moolhuijzen P."/>
            <person name="Albertyn Z."/>
            <person name="Shaban B."/>
            <person name="Motro Y."/>
            <person name="Dunn D.S."/>
            <person name="Schibeci D."/>
            <person name="Hunter A."/>
            <person name="Barrero R."/>
            <person name="Phillips N.D."/>
            <person name="Hampson D.J."/>
        </authorList>
    </citation>
    <scope>NUCLEOTIDE SEQUENCE [LARGE SCALE GENOMIC DNA]</scope>
    <source>
        <strain>ATCC 49526 / WA1</strain>
    </source>
</reference>
<sequence length="408" mass="44462">MAKGTYEGNKTHVNVGTIGHVDHGKTTLTSAITAVSSAMFPATVQKVAYDSVAKASESQGRRDPTKILTIATSHVEYESDNRHYAHVDCPGHADYIKNMITGAAQMDGAILVVSAEDGVMPQTKEHVLLSRQVGVNYIVVFLNKCDKLDDPEMAEIVEAEVIDVLDHYGFDGSKTPIIRGSAIKAIQAIEAGKDPRTDPDCKCILDLLNALDTYIPDPVREVDKDFLMSIEDVYSIPGRGTVVTGRIERGKIEKGNEVEIVGIRPTQKTTCTGVEMFKKEVVGIAGYNVGCLLRGIERKAVERGQVLAKPGTITPHKKFEAEVYILKKEEGGRHSGFVSGYRPQMYFRTTDVTGVINLQGDAQMIMPGDNANLTIELITPIAMEEKQRFAIREGGKTVGNGVVTKILE</sequence>
<evidence type="ECO:0000255" key="1">
    <source>
        <dbReference type="HAMAP-Rule" id="MF_00118"/>
    </source>
</evidence>
<protein>
    <recommendedName>
        <fullName evidence="1">Elongation factor Tu</fullName>
        <shortName evidence="1">EF-Tu</shortName>
        <ecNumber evidence="1">3.6.5.3</ecNumber>
    </recommendedName>
</protein>
<organism>
    <name type="scientific">Brachyspira hyodysenteriae (strain ATCC 49526 / WA1)</name>
    <dbReference type="NCBI Taxonomy" id="565034"/>
    <lineage>
        <taxon>Bacteria</taxon>
        <taxon>Pseudomonadati</taxon>
        <taxon>Spirochaetota</taxon>
        <taxon>Spirochaetia</taxon>
        <taxon>Brachyspirales</taxon>
        <taxon>Brachyspiraceae</taxon>
        <taxon>Brachyspira</taxon>
    </lineage>
</organism>
<dbReference type="EC" id="3.6.5.3" evidence="1"/>
<dbReference type="EMBL" id="CP001357">
    <property type="protein sequence ID" value="ACN84580.1"/>
    <property type="molecule type" value="Genomic_DNA"/>
</dbReference>
<dbReference type="RefSeq" id="WP_012671618.1">
    <property type="nucleotide sequence ID" value="NC_012225.1"/>
</dbReference>
<dbReference type="SMR" id="C0QVZ4"/>
<dbReference type="STRING" id="565034.BHWA1_02122"/>
<dbReference type="GeneID" id="63963274"/>
<dbReference type="KEGG" id="bhy:BHWA1_02122"/>
<dbReference type="eggNOG" id="COG0050">
    <property type="taxonomic scope" value="Bacteria"/>
</dbReference>
<dbReference type="HOGENOM" id="CLU_007265_0_1_12"/>
<dbReference type="Proteomes" id="UP000001803">
    <property type="component" value="Chromosome"/>
</dbReference>
<dbReference type="GO" id="GO:0005737">
    <property type="term" value="C:cytoplasm"/>
    <property type="evidence" value="ECO:0007669"/>
    <property type="project" value="UniProtKB-SubCell"/>
</dbReference>
<dbReference type="GO" id="GO:0005525">
    <property type="term" value="F:GTP binding"/>
    <property type="evidence" value="ECO:0007669"/>
    <property type="project" value="UniProtKB-UniRule"/>
</dbReference>
<dbReference type="GO" id="GO:0003924">
    <property type="term" value="F:GTPase activity"/>
    <property type="evidence" value="ECO:0007669"/>
    <property type="project" value="InterPro"/>
</dbReference>
<dbReference type="GO" id="GO:0003746">
    <property type="term" value="F:translation elongation factor activity"/>
    <property type="evidence" value="ECO:0007669"/>
    <property type="project" value="UniProtKB-UniRule"/>
</dbReference>
<dbReference type="CDD" id="cd01884">
    <property type="entry name" value="EF_Tu"/>
    <property type="match status" value="1"/>
</dbReference>
<dbReference type="CDD" id="cd03697">
    <property type="entry name" value="EFTU_II"/>
    <property type="match status" value="1"/>
</dbReference>
<dbReference type="CDD" id="cd03707">
    <property type="entry name" value="EFTU_III"/>
    <property type="match status" value="1"/>
</dbReference>
<dbReference type="FunFam" id="2.40.30.10:FF:000001">
    <property type="entry name" value="Elongation factor Tu"/>
    <property type="match status" value="1"/>
</dbReference>
<dbReference type="FunFam" id="3.40.50.300:FF:000003">
    <property type="entry name" value="Elongation factor Tu"/>
    <property type="match status" value="1"/>
</dbReference>
<dbReference type="Gene3D" id="3.40.50.300">
    <property type="entry name" value="P-loop containing nucleotide triphosphate hydrolases"/>
    <property type="match status" value="1"/>
</dbReference>
<dbReference type="Gene3D" id="2.40.30.10">
    <property type="entry name" value="Translation factors"/>
    <property type="match status" value="2"/>
</dbReference>
<dbReference type="HAMAP" id="MF_00118_B">
    <property type="entry name" value="EF_Tu_B"/>
    <property type="match status" value="1"/>
</dbReference>
<dbReference type="InterPro" id="IPR041709">
    <property type="entry name" value="EF-Tu_GTP-bd"/>
</dbReference>
<dbReference type="InterPro" id="IPR050055">
    <property type="entry name" value="EF-Tu_GTPase"/>
</dbReference>
<dbReference type="InterPro" id="IPR004161">
    <property type="entry name" value="EFTu-like_2"/>
</dbReference>
<dbReference type="InterPro" id="IPR033720">
    <property type="entry name" value="EFTU_2"/>
</dbReference>
<dbReference type="InterPro" id="IPR027417">
    <property type="entry name" value="P-loop_NTPase"/>
</dbReference>
<dbReference type="InterPro" id="IPR005225">
    <property type="entry name" value="Small_GTP-bd"/>
</dbReference>
<dbReference type="InterPro" id="IPR000795">
    <property type="entry name" value="T_Tr_GTP-bd_dom"/>
</dbReference>
<dbReference type="InterPro" id="IPR009000">
    <property type="entry name" value="Transl_B-barrel_sf"/>
</dbReference>
<dbReference type="InterPro" id="IPR009001">
    <property type="entry name" value="Transl_elong_EF1A/Init_IF2_C"/>
</dbReference>
<dbReference type="InterPro" id="IPR004541">
    <property type="entry name" value="Transl_elong_EFTu/EF1A_bac/org"/>
</dbReference>
<dbReference type="InterPro" id="IPR004160">
    <property type="entry name" value="Transl_elong_EFTu/EF1A_C"/>
</dbReference>
<dbReference type="NCBIfam" id="TIGR00485">
    <property type="entry name" value="EF-Tu"/>
    <property type="match status" value="1"/>
</dbReference>
<dbReference type="NCBIfam" id="NF000766">
    <property type="entry name" value="PRK00049.1"/>
    <property type="match status" value="1"/>
</dbReference>
<dbReference type="NCBIfam" id="NF009372">
    <property type="entry name" value="PRK12735.1"/>
    <property type="match status" value="1"/>
</dbReference>
<dbReference type="NCBIfam" id="NF009373">
    <property type="entry name" value="PRK12736.1"/>
    <property type="match status" value="1"/>
</dbReference>
<dbReference type="NCBIfam" id="TIGR00231">
    <property type="entry name" value="small_GTP"/>
    <property type="match status" value="1"/>
</dbReference>
<dbReference type="PANTHER" id="PTHR43721:SF22">
    <property type="entry name" value="ELONGATION FACTOR TU, MITOCHONDRIAL"/>
    <property type="match status" value="1"/>
</dbReference>
<dbReference type="PANTHER" id="PTHR43721">
    <property type="entry name" value="ELONGATION FACTOR TU-RELATED"/>
    <property type="match status" value="1"/>
</dbReference>
<dbReference type="Pfam" id="PF00009">
    <property type="entry name" value="GTP_EFTU"/>
    <property type="match status" value="1"/>
</dbReference>
<dbReference type="Pfam" id="PF03144">
    <property type="entry name" value="GTP_EFTU_D2"/>
    <property type="match status" value="1"/>
</dbReference>
<dbReference type="Pfam" id="PF03143">
    <property type="entry name" value="GTP_EFTU_D3"/>
    <property type="match status" value="1"/>
</dbReference>
<dbReference type="PRINTS" id="PR00315">
    <property type="entry name" value="ELONGATNFCT"/>
</dbReference>
<dbReference type="SUPFAM" id="SSF50465">
    <property type="entry name" value="EF-Tu/eEF-1alpha/eIF2-gamma C-terminal domain"/>
    <property type="match status" value="1"/>
</dbReference>
<dbReference type="SUPFAM" id="SSF52540">
    <property type="entry name" value="P-loop containing nucleoside triphosphate hydrolases"/>
    <property type="match status" value="1"/>
</dbReference>
<dbReference type="SUPFAM" id="SSF50447">
    <property type="entry name" value="Translation proteins"/>
    <property type="match status" value="1"/>
</dbReference>
<dbReference type="PROSITE" id="PS51722">
    <property type="entry name" value="G_TR_2"/>
    <property type="match status" value="1"/>
</dbReference>